<evidence type="ECO:0000250" key="1"/>
<evidence type="ECO:0000255" key="2"/>
<evidence type="ECO:0000269" key="3">
    <source>
    </source>
</evidence>
<evidence type="ECO:0000305" key="4"/>
<feature type="chain" id="PRO_0000218839" description="Membrane progestin receptor alpha">
    <location>
        <begin position="1"/>
        <end position="352"/>
    </location>
</feature>
<feature type="topological domain" description="Cytoplasmic" evidence="2">
    <location>
        <begin position="1"/>
        <end position="75"/>
    </location>
</feature>
<feature type="transmembrane region" description="Helical; Name=1" evidence="2">
    <location>
        <begin position="76"/>
        <end position="96"/>
    </location>
</feature>
<feature type="topological domain" description="Extracellular" evidence="2">
    <location>
        <begin position="97"/>
        <end position="110"/>
    </location>
</feature>
<feature type="transmembrane region" description="Helical; Name=2" evidence="2">
    <location>
        <begin position="111"/>
        <end position="131"/>
    </location>
</feature>
<feature type="topological domain" description="Cytoplasmic" evidence="2">
    <location>
        <begin position="132"/>
        <end position="139"/>
    </location>
</feature>
<feature type="transmembrane region" description="Helical; Name=3" evidence="2">
    <location>
        <begin position="140"/>
        <end position="160"/>
    </location>
</feature>
<feature type="topological domain" description="Extracellular" evidence="2">
    <location>
        <begin position="161"/>
        <end position="175"/>
    </location>
</feature>
<feature type="transmembrane region" description="Helical; Name=4" evidence="2">
    <location>
        <begin position="176"/>
        <end position="196"/>
    </location>
</feature>
<feature type="topological domain" description="Cytoplasmic" evidence="2">
    <location>
        <begin position="197"/>
        <end position="242"/>
    </location>
</feature>
<feature type="transmembrane region" description="Helical; Name=5" evidence="2">
    <location>
        <begin position="243"/>
        <end position="263"/>
    </location>
</feature>
<feature type="topological domain" description="Extracellular" evidence="2">
    <location>
        <begin position="264"/>
        <end position="275"/>
    </location>
</feature>
<feature type="transmembrane region" description="Helical; Name=6" evidence="2">
    <location>
        <begin position="276"/>
        <end position="296"/>
    </location>
</feature>
<feature type="topological domain" description="Cytoplasmic" evidence="2">
    <location>
        <begin position="297"/>
        <end position="316"/>
    </location>
</feature>
<feature type="transmembrane region" description="Helical; Name=7" evidence="2">
    <location>
        <begin position="317"/>
        <end position="337"/>
    </location>
</feature>
<feature type="topological domain" description="Extracellular" evidence="2">
    <location>
        <begin position="338"/>
        <end position="352"/>
    </location>
</feature>
<comment type="function">
    <text evidence="1 3">Steroid membrane receptor. Binds progesterone, progestin and 17-hydroxyprogesterone in vitro. Capable of mediating progestin-induced oocyte maturation (By similarity).</text>
</comment>
<comment type="subcellular location">
    <subcellularLocation>
        <location evidence="3">Cell membrane</location>
        <topology evidence="3">Multi-pass membrane protein</topology>
    </subcellularLocation>
    <text>Localized to the cell membrane of oocytes and sperm.</text>
</comment>
<comment type="tissue specificity">
    <text evidence="3">Strongly expressed in ovary and brain; lower expression in testis and pituitary. Not detected in heart, kidney, spleen, intestine, gill and muscle.</text>
</comment>
<comment type="developmental stage">
    <text>Expressed at low expression in fully grown oocytes, highly expressed in maturing oocytes undergoing germinal vesicle breakdown (GVBD) and weakly expressed in ovulated oocytes.</text>
</comment>
<comment type="induction">
    <text evidence="3">By progestin in ovarian tissues and human chorionic gonadotropin (hCG) in oocytes undergoing meiotic maturation.</text>
</comment>
<comment type="miscellaneous">
    <text>May activate a pertussis toxin-sensitive inhibitory G protein that inhibits adenylate cyclase activity; it may therefore be a G-protein coupled receptor.</text>
</comment>
<comment type="similarity">
    <text evidence="4">Belongs to the ADIPOR family.</text>
</comment>
<keyword id="KW-1003">Cell membrane</keyword>
<keyword id="KW-0217">Developmental protein</keyword>
<keyword id="KW-0221">Differentiation</keyword>
<keyword id="KW-0446">Lipid-binding</keyword>
<keyword id="KW-0472">Membrane</keyword>
<keyword id="KW-0896">Oogenesis</keyword>
<keyword id="KW-0675">Receptor</keyword>
<keyword id="KW-0754">Steroid-binding</keyword>
<keyword id="KW-0812">Transmembrane</keyword>
<keyword id="KW-1133">Transmembrane helix</keyword>
<sequence length="352" mass="40585">MATVVMEQIGRLFINAQQLRQIPQLLESAFPTLPCTVKVSDVPWVFRERHILTGYRQPDQSWRYYFLTLFQRHNETLNVWTHLLAAFIILVKWQEISETVDFLRDPHAQPLFIVLLAAFTYLSFSALAHLLSAKSELSYYTFYFLDYVGVAVYQYGSALAHYYYAIEKEWHTKVQGLFLPAAAFLAWLTCFGCCYGKYASPELPKVANKLFQVVPSALAYCLDISPVVHRIYSCYQEGCSDPVVAYHFYHVVFFLIGAYFFCCPHPESLFPGKCDFIGQGHQLFHVFVVVCTLTQVEALRTDFTERRPFYERLHGDLAHDAVALFIFTACCSALTAFYVRQRVRASLHEKGE</sequence>
<dbReference type="EMBL" id="AF262028">
    <property type="protein sequence ID" value="AAO39265.1"/>
    <property type="molecule type" value="mRNA"/>
</dbReference>
<dbReference type="SMR" id="Q801D8"/>
<dbReference type="GO" id="GO:0005886">
    <property type="term" value="C:plasma membrane"/>
    <property type="evidence" value="ECO:0007669"/>
    <property type="project" value="UniProtKB-SubCell"/>
</dbReference>
<dbReference type="GO" id="GO:0003707">
    <property type="term" value="F:nuclear steroid receptor activity"/>
    <property type="evidence" value="ECO:0007669"/>
    <property type="project" value="TreeGrafter"/>
</dbReference>
<dbReference type="GO" id="GO:0005496">
    <property type="term" value="F:steroid binding"/>
    <property type="evidence" value="ECO:0007669"/>
    <property type="project" value="UniProtKB-KW"/>
</dbReference>
<dbReference type="GO" id="GO:0048477">
    <property type="term" value="P:oogenesis"/>
    <property type="evidence" value="ECO:0007669"/>
    <property type="project" value="UniProtKB-KW"/>
</dbReference>
<dbReference type="InterPro" id="IPR004254">
    <property type="entry name" value="AdipoR/HlyIII-related"/>
</dbReference>
<dbReference type="PANTHER" id="PTHR20855">
    <property type="entry name" value="ADIPOR/PROGESTIN RECEPTOR-RELATED"/>
    <property type="match status" value="1"/>
</dbReference>
<dbReference type="PANTHER" id="PTHR20855:SF41">
    <property type="entry name" value="MEMBRANE PROGESTIN RECEPTOR ALPHA"/>
    <property type="match status" value="1"/>
</dbReference>
<dbReference type="Pfam" id="PF03006">
    <property type="entry name" value="HlyIII"/>
    <property type="match status" value="1"/>
</dbReference>
<organism>
    <name type="scientific">Cynoscion nebulosus</name>
    <name type="common">Spotted seatrout</name>
    <name type="synonym">Otolithus nebulosus</name>
    <dbReference type="NCBI Taxonomy" id="13029"/>
    <lineage>
        <taxon>Eukaryota</taxon>
        <taxon>Metazoa</taxon>
        <taxon>Chordata</taxon>
        <taxon>Craniata</taxon>
        <taxon>Vertebrata</taxon>
        <taxon>Euteleostomi</taxon>
        <taxon>Actinopterygii</taxon>
        <taxon>Neopterygii</taxon>
        <taxon>Teleostei</taxon>
        <taxon>Neoteleostei</taxon>
        <taxon>Acanthomorphata</taxon>
        <taxon>Eupercaria</taxon>
        <taxon>Sciaenidae</taxon>
        <taxon>Cynoscion</taxon>
    </lineage>
</organism>
<accession>Q801D8</accession>
<protein>
    <recommendedName>
        <fullName>Membrane progestin receptor alpha</fullName>
        <shortName>mPR alpha</shortName>
    </recommendedName>
    <alternativeName>
        <fullName>Membrane progesterone receptor</fullName>
    </alternativeName>
</protein>
<gene>
    <name type="primary">mpra</name>
</gene>
<reference key="1">
    <citation type="journal article" date="2003" name="Proc. Natl. Acad. Sci. U.S.A.">
        <title>Cloning, expression, and characterization of a membrane progestin receptor and evidence it is an intermediary in meiotic maturation of fish oocytes.</title>
        <authorList>
            <person name="Zhu Y."/>
            <person name="Rice C.D."/>
            <person name="Pang Y."/>
            <person name="Pace M."/>
            <person name="Thomas P."/>
        </authorList>
    </citation>
    <scope>NUCLEOTIDE SEQUENCE [MRNA]</scope>
    <scope>FUNCTION IN MEIOTIC MATURATION</scope>
    <scope>TISSUE SPECIFICITY</scope>
    <scope>SUBCELLULAR LOCATION</scope>
    <scope>INDUCTION</scope>
    <source>
        <tissue>Brain</tissue>
        <tissue>Gonad</tissue>
        <tissue>Pituitary</tissue>
    </source>
</reference>
<reference key="2">
    <citation type="journal article" date="2003" name="Proc. Natl. Acad. Sci. U.S.A.">
        <title>The further redefining of steroid-mediated signaling.</title>
        <authorList>
            <person name="Hammes S.R."/>
        </authorList>
    </citation>
    <scope>REVIEW</scope>
</reference>
<name>MPRA_CYNNE</name>
<proteinExistence type="evidence at protein level"/>